<organism>
    <name type="scientific">Histophilus somni (strain 129Pt)</name>
    <name type="common">Haemophilus somnus</name>
    <dbReference type="NCBI Taxonomy" id="205914"/>
    <lineage>
        <taxon>Bacteria</taxon>
        <taxon>Pseudomonadati</taxon>
        <taxon>Pseudomonadota</taxon>
        <taxon>Gammaproteobacteria</taxon>
        <taxon>Pasteurellales</taxon>
        <taxon>Pasteurellaceae</taxon>
        <taxon>Histophilus</taxon>
    </lineage>
</organism>
<feature type="chain" id="PRO_0000284216" description="Endoribonuclease YbeY">
    <location>
        <begin position="1"/>
        <end position="154"/>
    </location>
</feature>
<feature type="binding site" evidence="1">
    <location>
        <position position="114"/>
    </location>
    <ligand>
        <name>Zn(2+)</name>
        <dbReference type="ChEBI" id="CHEBI:29105"/>
        <note>catalytic</note>
    </ligand>
</feature>
<feature type="binding site" evidence="1">
    <location>
        <position position="118"/>
    </location>
    <ligand>
        <name>Zn(2+)</name>
        <dbReference type="ChEBI" id="CHEBI:29105"/>
        <note>catalytic</note>
    </ligand>
</feature>
<feature type="binding site" evidence="1">
    <location>
        <position position="124"/>
    </location>
    <ligand>
        <name>Zn(2+)</name>
        <dbReference type="ChEBI" id="CHEBI:29105"/>
        <note>catalytic</note>
    </ligand>
</feature>
<sequence>MKNVIIDLQIASEDVTNLPSVEQIQLWANAAIRAENSQPEMTVRIVDEEESHHLNLTYRGKDKPTNVLSFPFECPDEIELPLIGDLVICRQVVEREATEQEKPLMAHWAHMIVHGSLHLLGYDHIEDDEAEEMERLETEIMLSLGFTDPYIIEK</sequence>
<reference key="1">
    <citation type="journal article" date="2007" name="J. Bacteriol.">
        <title>Complete genome sequence of Haemophilus somnus (Histophilus somni) strain 129Pt and comparison to Haemophilus ducreyi 35000HP and Haemophilus influenzae Rd.</title>
        <authorList>
            <person name="Challacombe J.F."/>
            <person name="Duncan A.J."/>
            <person name="Brettin T.S."/>
            <person name="Bruce D."/>
            <person name="Chertkov O."/>
            <person name="Detter J.C."/>
            <person name="Han C.S."/>
            <person name="Misra M."/>
            <person name="Richardson P."/>
            <person name="Tapia R."/>
            <person name="Thayer N."/>
            <person name="Xie G."/>
            <person name="Inzana T.J."/>
        </authorList>
    </citation>
    <scope>NUCLEOTIDE SEQUENCE [LARGE SCALE GENOMIC DNA]</scope>
    <source>
        <strain>129Pt</strain>
    </source>
</reference>
<gene>
    <name evidence="1" type="primary">ybeY</name>
    <name type="ordered locus">HS_0346</name>
</gene>
<keyword id="KW-0963">Cytoplasm</keyword>
<keyword id="KW-0255">Endonuclease</keyword>
<keyword id="KW-0378">Hydrolase</keyword>
<keyword id="KW-0479">Metal-binding</keyword>
<keyword id="KW-0540">Nuclease</keyword>
<keyword id="KW-0690">Ribosome biogenesis</keyword>
<keyword id="KW-0698">rRNA processing</keyword>
<keyword id="KW-0862">Zinc</keyword>
<name>YBEY_HISS1</name>
<dbReference type="EC" id="3.1.-.-" evidence="1"/>
<dbReference type="EMBL" id="CP000436">
    <property type="protein sequence ID" value="ABI24624.1"/>
    <property type="molecule type" value="Genomic_DNA"/>
</dbReference>
<dbReference type="SMR" id="Q0I1E6"/>
<dbReference type="KEGG" id="hso:HS_0346"/>
<dbReference type="eggNOG" id="COG0319">
    <property type="taxonomic scope" value="Bacteria"/>
</dbReference>
<dbReference type="HOGENOM" id="CLU_106710_0_1_6"/>
<dbReference type="GO" id="GO:0005737">
    <property type="term" value="C:cytoplasm"/>
    <property type="evidence" value="ECO:0007669"/>
    <property type="project" value="UniProtKB-SubCell"/>
</dbReference>
<dbReference type="GO" id="GO:0004222">
    <property type="term" value="F:metalloendopeptidase activity"/>
    <property type="evidence" value="ECO:0007669"/>
    <property type="project" value="InterPro"/>
</dbReference>
<dbReference type="GO" id="GO:0004521">
    <property type="term" value="F:RNA endonuclease activity"/>
    <property type="evidence" value="ECO:0007669"/>
    <property type="project" value="UniProtKB-UniRule"/>
</dbReference>
<dbReference type="GO" id="GO:0008270">
    <property type="term" value="F:zinc ion binding"/>
    <property type="evidence" value="ECO:0007669"/>
    <property type="project" value="UniProtKB-UniRule"/>
</dbReference>
<dbReference type="GO" id="GO:0006364">
    <property type="term" value="P:rRNA processing"/>
    <property type="evidence" value="ECO:0007669"/>
    <property type="project" value="UniProtKB-UniRule"/>
</dbReference>
<dbReference type="Gene3D" id="3.40.390.30">
    <property type="entry name" value="Metalloproteases ('zincins'), catalytic domain"/>
    <property type="match status" value="1"/>
</dbReference>
<dbReference type="HAMAP" id="MF_00009">
    <property type="entry name" value="Endoribonucl_YbeY"/>
    <property type="match status" value="1"/>
</dbReference>
<dbReference type="InterPro" id="IPR023091">
    <property type="entry name" value="MetalPrtase_cat_dom_sf_prd"/>
</dbReference>
<dbReference type="InterPro" id="IPR002036">
    <property type="entry name" value="YbeY"/>
</dbReference>
<dbReference type="InterPro" id="IPR020549">
    <property type="entry name" value="YbeY_CS"/>
</dbReference>
<dbReference type="NCBIfam" id="TIGR00043">
    <property type="entry name" value="rRNA maturation RNase YbeY"/>
    <property type="match status" value="1"/>
</dbReference>
<dbReference type="PANTHER" id="PTHR46986">
    <property type="entry name" value="ENDORIBONUCLEASE YBEY, CHLOROPLASTIC"/>
    <property type="match status" value="1"/>
</dbReference>
<dbReference type="PANTHER" id="PTHR46986:SF1">
    <property type="entry name" value="ENDORIBONUCLEASE YBEY, CHLOROPLASTIC"/>
    <property type="match status" value="1"/>
</dbReference>
<dbReference type="Pfam" id="PF02130">
    <property type="entry name" value="YbeY"/>
    <property type="match status" value="1"/>
</dbReference>
<dbReference type="SUPFAM" id="SSF55486">
    <property type="entry name" value="Metalloproteases ('zincins'), catalytic domain"/>
    <property type="match status" value="1"/>
</dbReference>
<dbReference type="PROSITE" id="PS01306">
    <property type="entry name" value="UPF0054"/>
    <property type="match status" value="1"/>
</dbReference>
<protein>
    <recommendedName>
        <fullName evidence="1">Endoribonuclease YbeY</fullName>
        <ecNumber evidence="1">3.1.-.-</ecNumber>
    </recommendedName>
</protein>
<evidence type="ECO:0000255" key="1">
    <source>
        <dbReference type="HAMAP-Rule" id="MF_00009"/>
    </source>
</evidence>
<comment type="function">
    <text evidence="1">Single strand-specific metallo-endoribonuclease involved in late-stage 70S ribosome quality control and in maturation of the 3' terminus of the 16S rRNA.</text>
</comment>
<comment type="cofactor">
    <cofactor evidence="1">
        <name>Zn(2+)</name>
        <dbReference type="ChEBI" id="CHEBI:29105"/>
    </cofactor>
    <text evidence="1">Binds 1 zinc ion.</text>
</comment>
<comment type="subcellular location">
    <subcellularLocation>
        <location evidence="1">Cytoplasm</location>
    </subcellularLocation>
</comment>
<comment type="similarity">
    <text evidence="1">Belongs to the endoribonuclease YbeY family.</text>
</comment>
<accession>Q0I1E6</accession>
<proteinExistence type="inferred from homology"/>